<organism>
    <name type="scientific">Staphylococcus epidermidis (strain ATCC 35984 / DSM 28319 / BCRC 17069 / CCUG 31568 / BM 3577 / RP62A)</name>
    <dbReference type="NCBI Taxonomy" id="176279"/>
    <lineage>
        <taxon>Bacteria</taxon>
        <taxon>Bacillati</taxon>
        <taxon>Bacillota</taxon>
        <taxon>Bacilli</taxon>
        <taxon>Bacillales</taxon>
        <taxon>Staphylococcaceae</taxon>
        <taxon>Staphylococcus</taxon>
    </lineage>
</organism>
<sequence length="158" mass="18593">MSIYDIAVENYDGSTYLLKRYKGKVLIIVNTATNCTLNDQFNKLEMLYKKYHKYGLEILSFPCNDFNNQEPGLIKDIYRVYKYKFGITFPIHAKINVNGEHEHPLYTLLKCKQPGLFGSQIKWNFTKFVVDQQGNIVKRFLPCDNPNQMEKLIRQLLK</sequence>
<name>BSAA_STAEQ</name>
<keyword id="KW-0560">Oxidoreductase</keyword>
<keyword id="KW-0575">Peroxidase</keyword>
<keyword id="KW-1185">Reference proteome</keyword>
<comment type="similarity">
    <text evidence="2">Belongs to the glutathione peroxidase family.</text>
</comment>
<accession>Q5HKZ3</accession>
<evidence type="ECO:0000250" key="1"/>
<evidence type="ECO:0000305" key="2"/>
<gene>
    <name type="primary">bsaA</name>
    <name type="ordered locus">SERP2194</name>
</gene>
<feature type="chain" id="PRO_0000066657" description="Glutathione peroxidase homolog BsaA">
    <location>
        <begin position="1"/>
        <end position="158"/>
    </location>
</feature>
<feature type="active site" evidence="1">
    <location>
        <position position="36"/>
    </location>
</feature>
<reference key="1">
    <citation type="journal article" date="2005" name="J. Bacteriol.">
        <title>Insights on evolution of virulence and resistance from the complete genome analysis of an early methicillin-resistant Staphylococcus aureus strain and a biofilm-producing methicillin-resistant Staphylococcus epidermidis strain.</title>
        <authorList>
            <person name="Gill S.R."/>
            <person name="Fouts D.E."/>
            <person name="Archer G.L."/>
            <person name="Mongodin E.F."/>
            <person name="DeBoy R.T."/>
            <person name="Ravel J."/>
            <person name="Paulsen I.T."/>
            <person name="Kolonay J.F."/>
            <person name="Brinkac L.M."/>
            <person name="Beanan M.J."/>
            <person name="Dodson R.J."/>
            <person name="Daugherty S.C."/>
            <person name="Madupu R."/>
            <person name="Angiuoli S.V."/>
            <person name="Durkin A.S."/>
            <person name="Haft D.H."/>
            <person name="Vamathevan J.J."/>
            <person name="Khouri H."/>
            <person name="Utterback T.R."/>
            <person name="Lee C."/>
            <person name="Dimitrov G."/>
            <person name="Jiang L."/>
            <person name="Qin H."/>
            <person name="Weidman J."/>
            <person name="Tran K."/>
            <person name="Kang K.H."/>
            <person name="Hance I.R."/>
            <person name="Nelson K.E."/>
            <person name="Fraser C.M."/>
        </authorList>
    </citation>
    <scope>NUCLEOTIDE SEQUENCE [LARGE SCALE GENOMIC DNA]</scope>
    <source>
        <strain>ATCC 35984 / DSM 28319 / BCRC 17069 / CCUG 31568 / BM 3577 / RP62A</strain>
    </source>
</reference>
<proteinExistence type="inferred from homology"/>
<dbReference type="EC" id="1.-.-.-"/>
<dbReference type="EMBL" id="CP000029">
    <property type="protein sequence ID" value="AAW53012.1"/>
    <property type="molecule type" value="Genomic_DNA"/>
</dbReference>
<dbReference type="RefSeq" id="WP_010959307.1">
    <property type="nucleotide sequence ID" value="NC_002976.3"/>
</dbReference>
<dbReference type="SMR" id="Q5HKZ3"/>
<dbReference type="STRING" id="176279.SERP2194"/>
<dbReference type="PeroxiBase" id="3985">
    <property type="entry name" value="SepGPx01"/>
</dbReference>
<dbReference type="KEGG" id="ser:SERP2194"/>
<dbReference type="eggNOG" id="COG0386">
    <property type="taxonomic scope" value="Bacteria"/>
</dbReference>
<dbReference type="HOGENOM" id="CLU_029507_2_2_9"/>
<dbReference type="Proteomes" id="UP000000531">
    <property type="component" value="Chromosome"/>
</dbReference>
<dbReference type="GO" id="GO:0004601">
    <property type="term" value="F:peroxidase activity"/>
    <property type="evidence" value="ECO:0007669"/>
    <property type="project" value="UniProtKB-KW"/>
</dbReference>
<dbReference type="GO" id="GO:0034599">
    <property type="term" value="P:cellular response to oxidative stress"/>
    <property type="evidence" value="ECO:0007669"/>
    <property type="project" value="TreeGrafter"/>
</dbReference>
<dbReference type="CDD" id="cd00340">
    <property type="entry name" value="GSH_Peroxidase"/>
    <property type="match status" value="1"/>
</dbReference>
<dbReference type="FunFam" id="3.40.30.10:FF:000301">
    <property type="entry name" value="Glutathione peroxidase"/>
    <property type="match status" value="1"/>
</dbReference>
<dbReference type="Gene3D" id="3.40.30.10">
    <property type="entry name" value="Glutaredoxin"/>
    <property type="match status" value="1"/>
</dbReference>
<dbReference type="InterPro" id="IPR000889">
    <property type="entry name" value="Glutathione_peroxidase"/>
</dbReference>
<dbReference type="InterPro" id="IPR036249">
    <property type="entry name" value="Thioredoxin-like_sf"/>
</dbReference>
<dbReference type="PANTHER" id="PTHR11592">
    <property type="entry name" value="GLUTATHIONE PEROXIDASE"/>
    <property type="match status" value="1"/>
</dbReference>
<dbReference type="PANTHER" id="PTHR11592:SF78">
    <property type="entry name" value="GLUTATHIONE PEROXIDASE"/>
    <property type="match status" value="1"/>
</dbReference>
<dbReference type="Pfam" id="PF00255">
    <property type="entry name" value="GSHPx"/>
    <property type="match status" value="1"/>
</dbReference>
<dbReference type="PIRSF" id="PIRSF000303">
    <property type="entry name" value="Glutathion_perox"/>
    <property type="match status" value="1"/>
</dbReference>
<dbReference type="PRINTS" id="PR01011">
    <property type="entry name" value="GLUTPROXDASE"/>
</dbReference>
<dbReference type="SUPFAM" id="SSF52833">
    <property type="entry name" value="Thioredoxin-like"/>
    <property type="match status" value="1"/>
</dbReference>
<dbReference type="PROSITE" id="PS51355">
    <property type="entry name" value="GLUTATHIONE_PEROXID_3"/>
    <property type="match status" value="1"/>
</dbReference>
<protein>
    <recommendedName>
        <fullName>Glutathione peroxidase homolog BsaA</fullName>
        <ecNumber>1.-.-.-</ecNumber>
    </recommendedName>
</protein>